<gene>
    <name evidence="1" type="primary">gltX</name>
    <name type="ordered locus">Mboo_2208</name>
</gene>
<sequence>MAGDEIKAALFLCALQNAVRHGGVPQAGAVIGMVMGAHPELRKQAKEVSAAAKDAIADVAALSPEERVTKLQSLSPEMFAALHEKHEKKKVLPDLEGAEHGVVMRFAPNPSGPLHIGHARAAALNDAYVKQYGGRYILRIEDTDPKRVDPEAYDMVKEDIAWMGLGITETVTQSERFPIYYDLCKQLIERGGAYVCTCENEHFKALKDAKKACPCRDQPVETALLLWEKMLNGGFKEGEASVRVKTDLLNPDPAMRDYPIFRILDAPLHPKIGDARVYPLMNFSVVADDHLLGVTHVIRGKDHIANTRRQRYIYDHFGWKVPVYRHYGRMGIEGVVLSTSQMHAGIDEGKYTGWDDIHLGTLRALARRGISPDAVKNAMIAIGIGDVDISFSWDNLYAENKKIVDPVANRYFFVPDPLEAKIAGASAHTAHAMLHPGHEEKGTRTLEFTGTVLIPRAEIFSVIVSSLNDISQGGDYESPQAKISSENVSPITSINEKKESVHSDNLPKLEGSLSSSLNDRKLVPRKYEPKREITMLRLKDLFNVNITWDGETPSFSYGGDSLADARAAKARIIQWLPAQSFVPCTLLTQDGEMKGACEPAVTTEVGKVVQFERIAFARIDAVTESGVRAYFTHT</sequence>
<name>SYE_METB6</name>
<feature type="chain" id="PRO_0000367803" description="Glutamate--tRNA ligase">
    <location>
        <begin position="1"/>
        <end position="634"/>
    </location>
</feature>
<feature type="short sequence motif" description="'HIGH' region" evidence="1">
    <location>
        <begin position="108"/>
        <end position="118"/>
    </location>
</feature>
<keyword id="KW-0030">Aminoacyl-tRNA synthetase</keyword>
<keyword id="KW-0067">ATP-binding</keyword>
<keyword id="KW-0963">Cytoplasm</keyword>
<keyword id="KW-0436">Ligase</keyword>
<keyword id="KW-0547">Nucleotide-binding</keyword>
<keyword id="KW-0648">Protein biosynthesis</keyword>
<keyword id="KW-1185">Reference proteome</keyword>
<proteinExistence type="inferred from homology"/>
<comment type="function">
    <text evidence="1">Catalyzes the attachment of glutamate to tRNA(Glu) in a two-step reaction: glutamate is first activated by ATP to form Glu-AMP and then transferred to the acceptor end of tRNA(Glu).</text>
</comment>
<comment type="catalytic activity">
    <reaction evidence="1">
        <text>tRNA(Glu) + L-glutamate + ATP = L-glutamyl-tRNA(Glu) + AMP + diphosphate</text>
        <dbReference type="Rhea" id="RHEA:23540"/>
        <dbReference type="Rhea" id="RHEA-COMP:9663"/>
        <dbReference type="Rhea" id="RHEA-COMP:9680"/>
        <dbReference type="ChEBI" id="CHEBI:29985"/>
        <dbReference type="ChEBI" id="CHEBI:30616"/>
        <dbReference type="ChEBI" id="CHEBI:33019"/>
        <dbReference type="ChEBI" id="CHEBI:78442"/>
        <dbReference type="ChEBI" id="CHEBI:78520"/>
        <dbReference type="ChEBI" id="CHEBI:456215"/>
        <dbReference type="EC" id="6.1.1.17"/>
    </reaction>
</comment>
<comment type="subcellular location">
    <subcellularLocation>
        <location evidence="1">Cytoplasm</location>
    </subcellularLocation>
</comment>
<comment type="similarity">
    <text evidence="1">Belongs to the class-I aminoacyl-tRNA synthetase family. Glutamate--tRNA ligase type 2 subfamily.</text>
</comment>
<reference key="1">
    <citation type="journal article" date="2015" name="Microbiology">
        <title>Genome of Methanoregula boonei 6A8 reveals adaptations to oligotrophic peatland environments.</title>
        <authorList>
            <person name="Braeuer S."/>
            <person name="Cadillo-Quiroz H."/>
            <person name="Kyrpides N."/>
            <person name="Woyke T."/>
            <person name="Goodwin L."/>
            <person name="Detter C."/>
            <person name="Podell S."/>
            <person name="Yavitt J.B."/>
            <person name="Zinder S.H."/>
        </authorList>
    </citation>
    <scope>NUCLEOTIDE SEQUENCE [LARGE SCALE GENOMIC DNA]</scope>
    <source>
        <strain>DSM 21154 / JCM 14090 / 6A8</strain>
    </source>
</reference>
<accession>A7IAG1</accession>
<organism>
    <name type="scientific">Methanoregula boonei (strain DSM 21154 / JCM 14090 / 6A8)</name>
    <dbReference type="NCBI Taxonomy" id="456442"/>
    <lineage>
        <taxon>Archaea</taxon>
        <taxon>Methanobacteriati</taxon>
        <taxon>Methanobacteriota</taxon>
        <taxon>Stenosarchaea group</taxon>
        <taxon>Methanomicrobia</taxon>
        <taxon>Methanomicrobiales</taxon>
        <taxon>Methanoregulaceae</taxon>
        <taxon>Methanoregula</taxon>
    </lineage>
</organism>
<evidence type="ECO:0000255" key="1">
    <source>
        <dbReference type="HAMAP-Rule" id="MF_02076"/>
    </source>
</evidence>
<dbReference type="EC" id="6.1.1.17" evidence="1"/>
<dbReference type="EMBL" id="CP000780">
    <property type="protein sequence ID" value="ABS56722.1"/>
    <property type="molecule type" value="Genomic_DNA"/>
</dbReference>
<dbReference type="RefSeq" id="WP_012107782.1">
    <property type="nucleotide sequence ID" value="NC_009712.1"/>
</dbReference>
<dbReference type="SMR" id="A7IAG1"/>
<dbReference type="STRING" id="456442.Mboo_2208"/>
<dbReference type="GeneID" id="5411228"/>
<dbReference type="KEGG" id="mbn:Mboo_2208"/>
<dbReference type="eggNOG" id="arCOG04302">
    <property type="taxonomic scope" value="Archaea"/>
</dbReference>
<dbReference type="HOGENOM" id="CLU_001882_1_3_2"/>
<dbReference type="OrthoDB" id="10470at2157"/>
<dbReference type="Proteomes" id="UP000002408">
    <property type="component" value="Chromosome"/>
</dbReference>
<dbReference type="GO" id="GO:0005829">
    <property type="term" value="C:cytosol"/>
    <property type="evidence" value="ECO:0007669"/>
    <property type="project" value="TreeGrafter"/>
</dbReference>
<dbReference type="GO" id="GO:0032991">
    <property type="term" value="C:protein-containing complex"/>
    <property type="evidence" value="ECO:0007669"/>
    <property type="project" value="UniProtKB-ARBA"/>
</dbReference>
<dbReference type="GO" id="GO:0005524">
    <property type="term" value="F:ATP binding"/>
    <property type="evidence" value="ECO:0007669"/>
    <property type="project" value="UniProtKB-UniRule"/>
</dbReference>
<dbReference type="GO" id="GO:0004818">
    <property type="term" value="F:glutamate-tRNA ligase activity"/>
    <property type="evidence" value="ECO:0007669"/>
    <property type="project" value="UniProtKB-UniRule"/>
</dbReference>
<dbReference type="GO" id="GO:0043604">
    <property type="term" value="P:amide biosynthetic process"/>
    <property type="evidence" value="ECO:0007669"/>
    <property type="project" value="TreeGrafter"/>
</dbReference>
<dbReference type="GO" id="GO:0006424">
    <property type="term" value="P:glutamyl-tRNA aminoacylation"/>
    <property type="evidence" value="ECO:0007669"/>
    <property type="project" value="UniProtKB-UniRule"/>
</dbReference>
<dbReference type="CDD" id="cd09287">
    <property type="entry name" value="GluRS_non_core"/>
    <property type="match status" value="1"/>
</dbReference>
<dbReference type="Gene3D" id="2.40.240.100">
    <property type="match status" value="1"/>
</dbReference>
<dbReference type="Gene3D" id="3.40.50.620">
    <property type="entry name" value="HUPs"/>
    <property type="match status" value="1"/>
</dbReference>
<dbReference type="Gene3D" id="2.40.240.10">
    <property type="entry name" value="Ribosomal Protein L25, Chain P"/>
    <property type="match status" value="1"/>
</dbReference>
<dbReference type="HAMAP" id="MF_02076">
    <property type="entry name" value="Glu_tRNA_synth_type2"/>
    <property type="match status" value="1"/>
</dbReference>
<dbReference type="InterPro" id="IPR001412">
    <property type="entry name" value="aa-tRNA-synth_I_CS"/>
</dbReference>
<dbReference type="InterPro" id="IPR050132">
    <property type="entry name" value="Gln/Glu-tRNA_Ligase"/>
</dbReference>
<dbReference type="InterPro" id="IPR004526">
    <property type="entry name" value="Glu-tRNA-synth_arc/euk"/>
</dbReference>
<dbReference type="InterPro" id="IPR000924">
    <property type="entry name" value="Glu/Gln-tRNA-synth"/>
</dbReference>
<dbReference type="InterPro" id="IPR020058">
    <property type="entry name" value="Glu/Gln-tRNA-synth_Ib_cat-dom"/>
</dbReference>
<dbReference type="InterPro" id="IPR020059">
    <property type="entry name" value="Glu/Gln-tRNA-synth_Ib_codon-bd"/>
</dbReference>
<dbReference type="InterPro" id="IPR020056">
    <property type="entry name" value="Rbsml_bL25/Gln-tRNA_synth_N"/>
</dbReference>
<dbReference type="InterPro" id="IPR011035">
    <property type="entry name" value="Ribosomal_bL25/Gln-tRNA_synth"/>
</dbReference>
<dbReference type="InterPro" id="IPR014729">
    <property type="entry name" value="Rossmann-like_a/b/a_fold"/>
</dbReference>
<dbReference type="InterPro" id="IPR049437">
    <property type="entry name" value="tRNA-synt_1c_C2"/>
</dbReference>
<dbReference type="NCBIfam" id="TIGR00463">
    <property type="entry name" value="gltX_arch"/>
    <property type="match status" value="1"/>
</dbReference>
<dbReference type="NCBIfam" id="NF003169">
    <property type="entry name" value="PRK04156.1"/>
    <property type="match status" value="1"/>
</dbReference>
<dbReference type="PANTHER" id="PTHR43097:SF5">
    <property type="entry name" value="GLUTAMATE--TRNA LIGASE"/>
    <property type="match status" value="1"/>
</dbReference>
<dbReference type="PANTHER" id="PTHR43097">
    <property type="entry name" value="GLUTAMINE-TRNA LIGASE"/>
    <property type="match status" value="1"/>
</dbReference>
<dbReference type="Pfam" id="PF00749">
    <property type="entry name" value="tRNA-synt_1c"/>
    <property type="match status" value="1"/>
</dbReference>
<dbReference type="Pfam" id="PF03950">
    <property type="entry name" value="tRNA-synt_1c_C"/>
    <property type="match status" value="1"/>
</dbReference>
<dbReference type="Pfam" id="PF20974">
    <property type="entry name" value="tRNA-synt_1c_C2"/>
    <property type="match status" value="1"/>
</dbReference>
<dbReference type="PRINTS" id="PR00987">
    <property type="entry name" value="TRNASYNTHGLU"/>
</dbReference>
<dbReference type="SUPFAM" id="SSF52374">
    <property type="entry name" value="Nucleotidylyl transferase"/>
    <property type="match status" value="1"/>
</dbReference>
<dbReference type="SUPFAM" id="SSF50715">
    <property type="entry name" value="Ribosomal protein L25-like"/>
    <property type="match status" value="2"/>
</dbReference>
<dbReference type="PROSITE" id="PS00178">
    <property type="entry name" value="AA_TRNA_LIGASE_I"/>
    <property type="match status" value="1"/>
</dbReference>
<protein>
    <recommendedName>
        <fullName evidence="1">Glutamate--tRNA ligase</fullName>
        <ecNumber evidence="1">6.1.1.17</ecNumber>
    </recommendedName>
    <alternativeName>
        <fullName evidence="1">Glutamyl-tRNA synthetase</fullName>
        <shortName evidence="1">GluRS</shortName>
    </alternativeName>
</protein>